<reference key="1">
    <citation type="journal article" date="2003" name="Mol. Microbiol.">
        <title>Genome-based analysis of virulence genes in a non-biofilm-forming Staphylococcus epidermidis strain (ATCC 12228).</title>
        <authorList>
            <person name="Zhang Y.-Q."/>
            <person name="Ren S.-X."/>
            <person name="Li H.-L."/>
            <person name="Wang Y.-X."/>
            <person name="Fu G."/>
            <person name="Yang J."/>
            <person name="Qin Z.-Q."/>
            <person name="Miao Y.-G."/>
            <person name="Wang W.-Y."/>
            <person name="Chen R.-S."/>
            <person name="Shen Y."/>
            <person name="Chen Z."/>
            <person name="Yuan Z.-H."/>
            <person name="Zhao G.-P."/>
            <person name="Qu D."/>
            <person name="Danchin A."/>
            <person name="Wen Y.-M."/>
        </authorList>
    </citation>
    <scope>NUCLEOTIDE SEQUENCE [LARGE SCALE GENOMIC DNA]</scope>
    <source>
        <strain>ATCC 12228 / FDA PCI 1200</strain>
    </source>
</reference>
<comment type="similarity">
    <text evidence="1">Belongs to the UPF0457 family.</text>
</comment>
<accession>Q8CRK5</accession>
<name>Y1763_STAES</name>
<evidence type="ECO:0000305" key="1"/>
<protein>
    <recommendedName>
        <fullName>UPF0457 protein SE_1763</fullName>
    </recommendedName>
</protein>
<proteinExistence type="inferred from homology"/>
<sequence length="86" mass="10029">MAMTVKKNDNEVRIQWRVADIKIPNNEIKNVTQDQDIHAVPEENGKEISRIGSTFGKTNRVLIDTDQHLYIIYTQNDQKVYNELTK</sequence>
<feature type="chain" id="PRO_0000294506" description="UPF0457 protein SE_1763">
    <location>
        <begin position="1"/>
        <end position="86"/>
    </location>
</feature>
<dbReference type="EMBL" id="AE015929">
    <property type="protein sequence ID" value="AAO05404.1"/>
    <property type="molecule type" value="Genomic_DNA"/>
</dbReference>
<dbReference type="RefSeq" id="NP_765318.1">
    <property type="nucleotide sequence ID" value="NC_004461.1"/>
</dbReference>
<dbReference type="RefSeq" id="WP_001829752.1">
    <property type="nucleotide sequence ID" value="NZ_WBME01000007.1"/>
</dbReference>
<dbReference type="SMR" id="Q8CRK5"/>
<dbReference type="KEGG" id="sep:SE_1763"/>
<dbReference type="PATRIC" id="fig|176280.10.peg.1721"/>
<dbReference type="eggNOG" id="ENOG50332PH">
    <property type="taxonomic scope" value="Bacteria"/>
</dbReference>
<dbReference type="HOGENOM" id="CLU_174851_0_0_9"/>
<dbReference type="OrthoDB" id="2397384at2"/>
<dbReference type="Proteomes" id="UP000001411">
    <property type="component" value="Chromosome"/>
</dbReference>
<dbReference type="InterPro" id="IPR055365">
    <property type="entry name" value="PH_SunI-like"/>
</dbReference>
<dbReference type="Pfam" id="PF23491">
    <property type="entry name" value="bPH_8"/>
    <property type="match status" value="1"/>
</dbReference>
<organism>
    <name type="scientific">Staphylococcus epidermidis (strain ATCC 12228 / FDA PCI 1200)</name>
    <dbReference type="NCBI Taxonomy" id="176280"/>
    <lineage>
        <taxon>Bacteria</taxon>
        <taxon>Bacillati</taxon>
        <taxon>Bacillota</taxon>
        <taxon>Bacilli</taxon>
        <taxon>Bacillales</taxon>
        <taxon>Staphylococcaceae</taxon>
        <taxon>Staphylococcus</taxon>
    </lineage>
</organism>
<gene>
    <name type="ordered locus">SE_1763</name>
</gene>